<reference key="1">
    <citation type="journal article" date="1993" name="Arch. Microbiol.">
        <title>Copper-containing nitrite reductase from Pseudomonas aureofaciens is functional in a mutationally cytochrome cd1-free background (NirS-) of Pseudomonas stutzeri.</title>
        <authorList>
            <person name="Glockner A.B."/>
            <person name="Juengst A."/>
            <person name="Zumft W.G."/>
        </authorList>
    </citation>
    <scope>NUCLEOTIDE SEQUENCE [GENOMIC DNA]</scope>
    <scope>PROTEIN SEQUENCE OF 25-41</scope>
    <source>
        <strain>ATCC 13985 / DSM 6698 / CIP 103295 / NBRC 3521 / NCIMB 9030 / NCTC 10686 / NRRL B-1576 / Stanier 38</strain>
    </source>
</reference>
<organism>
    <name type="scientific">Pseudomonas chlororaphis</name>
    <name type="common">Pseudomonas aureofaciens</name>
    <dbReference type="NCBI Taxonomy" id="333"/>
    <lineage>
        <taxon>Bacteria</taxon>
        <taxon>Pseudomonadati</taxon>
        <taxon>Pseudomonadota</taxon>
        <taxon>Gammaproteobacteria</taxon>
        <taxon>Pseudomonadales</taxon>
        <taxon>Pseudomonadaceae</taxon>
        <taxon>Pseudomonas</taxon>
    </lineage>
</organism>
<proteinExistence type="evidence at protein level"/>
<dbReference type="EC" id="1.7.2.1"/>
<dbReference type="EMBL" id="Z21945">
    <property type="protein sequence ID" value="CAA79939.1"/>
    <property type="molecule type" value="Genomic_DNA"/>
</dbReference>
<dbReference type="PIR" id="S32112">
    <property type="entry name" value="S32112"/>
</dbReference>
<dbReference type="SMR" id="Q06006"/>
<dbReference type="UniPathway" id="UPA00652">
    <property type="reaction ID" value="UER00707"/>
</dbReference>
<dbReference type="GO" id="GO:0042597">
    <property type="term" value="C:periplasmic space"/>
    <property type="evidence" value="ECO:0007669"/>
    <property type="project" value="UniProtKB-SubCell"/>
</dbReference>
<dbReference type="GO" id="GO:0005507">
    <property type="term" value="F:copper ion binding"/>
    <property type="evidence" value="ECO:0007669"/>
    <property type="project" value="InterPro"/>
</dbReference>
<dbReference type="GO" id="GO:0050421">
    <property type="term" value="F:nitrite reductase (NO-forming) activity"/>
    <property type="evidence" value="ECO:0007669"/>
    <property type="project" value="UniProtKB-EC"/>
</dbReference>
<dbReference type="GO" id="GO:0019333">
    <property type="term" value="P:denitrification pathway"/>
    <property type="evidence" value="ECO:0007669"/>
    <property type="project" value="UniProtKB-UniPathway"/>
</dbReference>
<dbReference type="GO" id="GO:0042128">
    <property type="term" value="P:nitrate assimilation"/>
    <property type="evidence" value="ECO:0007669"/>
    <property type="project" value="UniProtKB-KW"/>
</dbReference>
<dbReference type="CDD" id="cd11020">
    <property type="entry name" value="CuRO_1_CuNIR"/>
    <property type="match status" value="1"/>
</dbReference>
<dbReference type="CDD" id="cd04208">
    <property type="entry name" value="CuRO_2_CuNIR"/>
    <property type="match status" value="1"/>
</dbReference>
<dbReference type="Gene3D" id="2.60.40.420">
    <property type="entry name" value="Cupredoxins - blue copper proteins"/>
    <property type="match status" value="2"/>
</dbReference>
<dbReference type="InterPro" id="IPR011707">
    <property type="entry name" value="Cu-oxidase-like_N"/>
</dbReference>
<dbReference type="InterPro" id="IPR001117">
    <property type="entry name" value="Cu-oxidase_2nd"/>
</dbReference>
<dbReference type="InterPro" id="IPR045087">
    <property type="entry name" value="Cu-oxidase_fam"/>
</dbReference>
<dbReference type="InterPro" id="IPR008972">
    <property type="entry name" value="Cupredoxin"/>
</dbReference>
<dbReference type="InterPro" id="IPR001287">
    <property type="entry name" value="NO2-reductase_Cu"/>
</dbReference>
<dbReference type="NCBIfam" id="TIGR02376">
    <property type="entry name" value="Cu_nitrite_red"/>
    <property type="match status" value="1"/>
</dbReference>
<dbReference type="PANTHER" id="PTHR11709:SF394">
    <property type="entry name" value="FI03373P-RELATED"/>
    <property type="match status" value="1"/>
</dbReference>
<dbReference type="PANTHER" id="PTHR11709">
    <property type="entry name" value="MULTI-COPPER OXIDASE"/>
    <property type="match status" value="1"/>
</dbReference>
<dbReference type="Pfam" id="PF00394">
    <property type="entry name" value="Cu-oxidase"/>
    <property type="match status" value="1"/>
</dbReference>
<dbReference type="Pfam" id="PF07732">
    <property type="entry name" value="Cu-oxidase_3"/>
    <property type="match status" value="1"/>
</dbReference>
<dbReference type="PRINTS" id="PR00695">
    <property type="entry name" value="CUNO2RDTASE"/>
</dbReference>
<dbReference type="SUPFAM" id="SSF49503">
    <property type="entry name" value="Cupredoxins"/>
    <property type="match status" value="2"/>
</dbReference>
<protein>
    <recommendedName>
        <fullName>Copper-containing nitrite reductase</fullName>
        <ecNumber>1.7.2.1</ecNumber>
    </recommendedName>
    <alternativeName>
        <fullName>Cu-NIR</fullName>
    </alternativeName>
</protein>
<gene>
    <name type="primary">nirK</name>
</gene>
<feature type="signal peptide" evidence="2">
    <location>
        <begin position="1"/>
        <end position="24"/>
    </location>
</feature>
<feature type="chain" id="PRO_0000002988" description="Copper-containing nitrite reductase">
    <location>
        <begin position="25"/>
        <end position="363"/>
    </location>
</feature>
<feature type="domain" description="Plastocyanin-like 1">
    <location>
        <begin position="25"/>
        <end position="193"/>
    </location>
</feature>
<feature type="domain" description="Plastocyanin-like 2">
    <location>
        <begin position="194"/>
        <end position="363"/>
    </location>
</feature>
<feature type="binding site" description="type 1 copper site" evidence="1">
    <location>
        <position position="113"/>
    </location>
    <ligand>
        <name>Cu cation</name>
        <dbReference type="ChEBI" id="CHEBI:23378"/>
        <label>1</label>
    </ligand>
</feature>
<feature type="binding site" description="type 2 copper site" evidence="1">
    <location>
        <position position="118"/>
    </location>
    <ligand>
        <name>Cu cation</name>
        <dbReference type="ChEBI" id="CHEBI:23378"/>
        <label>2</label>
    </ligand>
</feature>
<feature type="binding site" description="type 2 copper site" evidence="1">
    <location>
        <position position="153"/>
    </location>
    <ligand>
        <name>Cu cation</name>
        <dbReference type="ChEBI" id="CHEBI:23378"/>
        <label>2</label>
    </ligand>
</feature>
<feature type="binding site" description="type 1 copper site" evidence="1">
    <location>
        <position position="154"/>
    </location>
    <ligand>
        <name>Cu cation</name>
        <dbReference type="ChEBI" id="CHEBI:23378"/>
        <label>1</label>
    </ligand>
</feature>
<feature type="binding site" description="type 1 copper site" evidence="1">
    <location>
        <position position="163"/>
    </location>
    <ligand>
        <name>Cu cation</name>
        <dbReference type="ChEBI" id="CHEBI:23378"/>
        <label>1</label>
    </ligand>
</feature>
<feature type="binding site" description="type 1 copper site" evidence="1">
    <location>
        <position position="168"/>
    </location>
    <ligand>
        <name>Cu cation</name>
        <dbReference type="ChEBI" id="CHEBI:23378"/>
        <label>1</label>
    </ligand>
</feature>
<feature type="binding site" description="type 2 copper site" evidence="1">
    <location>
        <position position="324"/>
    </location>
    <ligand>
        <name>Cu cation</name>
        <dbReference type="ChEBI" id="CHEBI:23378"/>
        <label>2</label>
    </ligand>
</feature>
<evidence type="ECO:0000250" key="1"/>
<evidence type="ECO:0000269" key="2">
    <source>
    </source>
</evidence>
<evidence type="ECO:0000305" key="3"/>
<comment type="catalytic activity">
    <reaction>
        <text>nitric oxide + Fe(III)-[cytochrome c] + H2O = Fe(II)-[cytochrome c] + nitrite + 2 H(+)</text>
        <dbReference type="Rhea" id="RHEA:15233"/>
        <dbReference type="Rhea" id="RHEA-COMP:10350"/>
        <dbReference type="Rhea" id="RHEA-COMP:14399"/>
        <dbReference type="ChEBI" id="CHEBI:15377"/>
        <dbReference type="ChEBI" id="CHEBI:15378"/>
        <dbReference type="ChEBI" id="CHEBI:16301"/>
        <dbReference type="ChEBI" id="CHEBI:16480"/>
        <dbReference type="ChEBI" id="CHEBI:29033"/>
        <dbReference type="ChEBI" id="CHEBI:29034"/>
        <dbReference type="EC" id="1.7.2.1"/>
    </reaction>
</comment>
<comment type="cofactor">
    <cofactor>
        <name>Cu(2+)</name>
        <dbReference type="ChEBI" id="CHEBI:29036"/>
    </cofactor>
    <text>Binds 1 Cu(2+) ion. The Cu(2+) ion is held by residues from each of 2 monomers of the trimer. Nitrite is bound to the Cu(2+) ion site. Pseudoazurin is the physiological electron donor for the Cu-NIR in vitro.</text>
</comment>
<comment type="cofactor">
    <cofactor>
        <name>Cu(+)</name>
        <dbReference type="ChEBI" id="CHEBI:49552"/>
    </cofactor>
    <text>Binds 1 Cu(+) ion. The Cu(+) ion is bound within a single monomer.</text>
</comment>
<comment type="cofactor">
    <cofactor>
        <name>FAD</name>
        <dbReference type="ChEBI" id="CHEBI:57692"/>
    </cofactor>
</comment>
<comment type="pathway">
    <text>Nitrogen metabolism; nitrate reduction (denitrification); dinitrogen from nitrate: step 2/4.</text>
</comment>
<comment type="subunit">
    <text evidence="1">Homotrimer.</text>
</comment>
<comment type="subcellular location">
    <subcellularLocation>
        <location>Periplasm</location>
    </subcellularLocation>
</comment>
<comment type="domain">
    <text>The type I copper site in NIR plays a crucial role for electron transfer from pseudoazurin to the type II copper site of NIR, which comprises the catalytic center of NIR for the reduction of nitrite.</text>
</comment>
<comment type="similarity">
    <text evidence="3">Belongs to the multicopper oxidase family.</text>
</comment>
<keyword id="KW-0186">Copper</keyword>
<keyword id="KW-0903">Direct protein sequencing</keyword>
<keyword id="KW-0274">FAD</keyword>
<keyword id="KW-0285">Flavoprotein</keyword>
<keyword id="KW-0479">Metal-binding</keyword>
<keyword id="KW-0534">Nitrate assimilation</keyword>
<keyword id="KW-0560">Oxidoreductase</keyword>
<keyword id="KW-0574">Periplasm</keyword>
<keyword id="KW-0677">Repeat</keyword>
<keyword id="KW-0732">Signal</keyword>
<sequence length="363" mass="39248">MSVFRSVLGACVLLGSCASSLALAGGAEGLQRVKVDLVAPPLVHPHEQVVSGPPKVVQFRMSIEEKKMVIDDQGTTLQAMTFNGSMPGPTLVVHEGDYIELTLVNPATNSMPHNVDFHAATGALGGAGLTQVVPGQEVVLRFKADRSGTFVYHCAPQGMVPWHVVSGMNGALMVLPRDGLRDPQGKLLHYDRVYTIGESDLYIPKDKDGHYKDYPDLASSYQDTRAVMRTLTPSHVVFNGRVGALTGANALTSKVGESVLFIHSQANRDSRPHLIGGHGDWVWTTGKFANPPQRNMETWFIPGGSAVAALYTFKQPGTYVYLSHNLIEAMELGALAQIKVEGQWDDDLMTQVKAPGPIVEPKQ</sequence>
<accession>Q06006</accession>
<name>NIR_PSECL</name>